<comment type="function">
    <text evidence="1">Component of the SWR1 complex which mediates the ATP-dependent exchange of histone H2A for the H2A variant HZT1 leading to transcriptional regulation of selected genes by chromatin remodeling.</text>
</comment>
<comment type="subunit">
    <text evidence="1">Component of the SWR1 chromatin remodeling complex.</text>
</comment>
<comment type="subcellular location">
    <subcellularLocation>
        <location evidence="1">Nucleus</location>
    </subcellularLocation>
</comment>
<comment type="similarity">
    <text evidence="2">Belongs to the SWC7 family.</text>
</comment>
<feature type="chain" id="PRO_0000076348" description="SWR1-complex protein 7">
    <location>
        <begin position="1"/>
        <end position="129"/>
    </location>
</feature>
<gene>
    <name type="primary">SWC7</name>
    <name type="ordered locus">CAGL0H05115g</name>
</gene>
<accession>Q6FRX6</accession>
<protein>
    <recommendedName>
        <fullName>SWR1-complex protein 7</fullName>
    </recommendedName>
</protein>
<proteinExistence type="inferred from homology"/>
<dbReference type="EMBL" id="CR380954">
    <property type="protein sequence ID" value="CAG59951.1"/>
    <property type="molecule type" value="Genomic_DNA"/>
</dbReference>
<dbReference type="RefSeq" id="XP_447018.1">
    <property type="nucleotide sequence ID" value="XM_447018.1"/>
</dbReference>
<dbReference type="FunCoup" id="Q6FRX6">
    <property type="interactions" value="79"/>
</dbReference>
<dbReference type="STRING" id="284593.Q6FRX6"/>
<dbReference type="EnsemblFungi" id="CAGL0H05115g-T">
    <property type="protein sequence ID" value="CAGL0H05115g-T-p1"/>
    <property type="gene ID" value="CAGL0H05115g"/>
</dbReference>
<dbReference type="KEGG" id="cgr:2888481"/>
<dbReference type="CGD" id="CAL0130480">
    <property type="gene designation" value="CAGL0H05115g"/>
</dbReference>
<dbReference type="VEuPathDB" id="FungiDB:B1J91_H05115g"/>
<dbReference type="VEuPathDB" id="FungiDB:CAGL0H05115g"/>
<dbReference type="eggNOG" id="ENOG502S4GP">
    <property type="taxonomic scope" value="Eukaryota"/>
</dbReference>
<dbReference type="HOGENOM" id="CLU_157410_0_0_1"/>
<dbReference type="InParanoid" id="Q6FRX6"/>
<dbReference type="OMA" id="TLANHYY"/>
<dbReference type="Proteomes" id="UP000002428">
    <property type="component" value="Chromosome H"/>
</dbReference>
<dbReference type="GO" id="GO:0000812">
    <property type="term" value="C:Swr1 complex"/>
    <property type="evidence" value="ECO:0007669"/>
    <property type="project" value="EnsemblFungi"/>
</dbReference>
<dbReference type="GO" id="GO:0006338">
    <property type="term" value="P:chromatin remodeling"/>
    <property type="evidence" value="ECO:0007669"/>
    <property type="project" value="EnsemblFungi"/>
</dbReference>
<dbReference type="InterPro" id="IPR020195">
    <property type="entry name" value="SWR1_Swc7"/>
</dbReference>
<dbReference type="Pfam" id="PF17330">
    <property type="entry name" value="SWC7"/>
    <property type="match status" value="1"/>
</dbReference>
<sequence>MTESEYSSKVRLLILQILLQHQQSLVMKNKDLDIKKLLVEPVIDIEVMNNCQSNTFLKLNAPTVSKLTVRNLRFLVEEWLSEGIPNVPKEETTIITLANYYYSKRINELEEKELPTIRSEAKELFDRLK</sequence>
<reference key="1">
    <citation type="journal article" date="2004" name="Nature">
        <title>Genome evolution in yeasts.</title>
        <authorList>
            <person name="Dujon B."/>
            <person name="Sherman D."/>
            <person name="Fischer G."/>
            <person name="Durrens P."/>
            <person name="Casaregola S."/>
            <person name="Lafontaine I."/>
            <person name="de Montigny J."/>
            <person name="Marck C."/>
            <person name="Neuveglise C."/>
            <person name="Talla E."/>
            <person name="Goffard N."/>
            <person name="Frangeul L."/>
            <person name="Aigle M."/>
            <person name="Anthouard V."/>
            <person name="Babour A."/>
            <person name="Barbe V."/>
            <person name="Barnay S."/>
            <person name="Blanchin S."/>
            <person name="Beckerich J.-M."/>
            <person name="Beyne E."/>
            <person name="Bleykasten C."/>
            <person name="Boisrame A."/>
            <person name="Boyer J."/>
            <person name="Cattolico L."/>
            <person name="Confanioleri F."/>
            <person name="de Daruvar A."/>
            <person name="Despons L."/>
            <person name="Fabre E."/>
            <person name="Fairhead C."/>
            <person name="Ferry-Dumazet H."/>
            <person name="Groppi A."/>
            <person name="Hantraye F."/>
            <person name="Hennequin C."/>
            <person name="Jauniaux N."/>
            <person name="Joyet P."/>
            <person name="Kachouri R."/>
            <person name="Kerrest A."/>
            <person name="Koszul R."/>
            <person name="Lemaire M."/>
            <person name="Lesur I."/>
            <person name="Ma L."/>
            <person name="Muller H."/>
            <person name="Nicaud J.-M."/>
            <person name="Nikolski M."/>
            <person name="Oztas S."/>
            <person name="Ozier-Kalogeropoulos O."/>
            <person name="Pellenz S."/>
            <person name="Potier S."/>
            <person name="Richard G.-F."/>
            <person name="Straub M.-L."/>
            <person name="Suleau A."/>
            <person name="Swennen D."/>
            <person name="Tekaia F."/>
            <person name="Wesolowski-Louvel M."/>
            <person name="Westhof E."/>
            <person name="Wirth B."/>
            <person name="Zeniou-Meyer M."/>
            <person name="Zivanovic Y."/>
            <person name="Bolotin-Fukuhara M."/>
            <person name="Thierry A."/>
            <person name="Bouchier C."/>
            <person name="Caudron B."/>
            <person name="Scarpelli C."/>
            <person name="Gaillardin C."/>
            <person name="Weissenbach J."/>
            <person name="Wincker P."/>
            <person name="Souciet J.-L."/>
        </authorList>
    </citation>
    <scope>NUCLEOTIDE SEQUENCE [LARGE SCALE GENOMIC DNA]</scope>
    <source>
        <strain>ATCC 2001 / BCRC 20586 / JCM 3761 / NBRC 0622 / NRRL Y-65 / CBS 138</strain>
    </source>
</reference>
<keyword id="KW-0010">Activator</keyword>
<keyword id="KW-0156">Chromatin regulator</keyword>
<keyword id="KW-0539">Nucleus</keyword>
<keyword id="KW-1185">Reference proteome</keyword>
<keyword id="KW-0804">Transcription</keyword>
<keyword id="KW-0805">Transcription regulation</keyword>
<evidence type="ECO:0000250" key="1"/>
<evidence type="ECO:0000305" key="2"/>
<organism>
    <name type="scientific">Candida glabrata (strain ATCC 2001 / BCRC 20586 / JCM 3761 / NBRC 0622 / NRRL Y-65 / CBS 138)</name>
    <name type="common">Yeast</name>
    <name type="synonym">Nakaseomyces glabratus</name>
    <dbReference type="NCBI Taxonomy" id="284593"/>
    <lineage>
        <taxon>Eukaryota</taxon>
        <taxon>Fungi</taxon>
        <taxon>Dikarya</taxon>
        <taxon>Ascomycota</taxon>
        <taxon>Saccharomycotina</taxon>
        <taxon>Saccharomycetes</taxon>
        <taxon>Saccharomycetales</taxon>
        <taxon>Saccharomycetaceae</taxon>
        <taxon>Nakaseomyces</taxon>
    </lineage>
</organism>
<name>SWC7_CANGA</name>